<proteinExistence type="inferred from homology"/>
<keyword id="KW-1185">Reference proteome</keyword>
<keyword id="KW-0687">Ribonucleoprotein</keyword>
<keyword id="KW-0689">Ribosomal protein</keyword>
<keyword id="KW-0694">RNA-binding</keyword>
<keyword id="KW-0699">rRNA-binding</keyword>
<keyword id="KW-0820">tRNA-binding</keyword>
<accession>Q62GK1</accession>
<comment type="function">
    <text evidence="1">One of the primary rRNA binding proteins, it binds directly to 16S rRNA where it nucleates assembly of the head domain of the 30S subunit. Is located at the subunit interface close to the decoding center, probably blocks exit of the E-site tRNA.</text>
</comment>
<comment type="subunit">
    <text evidence="1">Part of the 30S ribosomal subunit. Contacts proteins S9 and S11.</text>
</comment>
<comment type="similarity">
    <text evidence="1">Belongs to the universal ribosomal protein uS7 family.</text>
</comment>
<evidence type="ECO:0000255" key="1">
    <source>
        <dbReference type="HAMAP-Rule" id="MF_00480"/>
    </source>
</evidence>
<evidence type="ECO:0000305" key="2"/>
<name>RS7_BURMA</name>
<feature type="chain" id="PRO_0000124236" description="Small ribosomal subunit protein uS7">
    <location>
        <begin position="1"/>
        <end position="156"/>
    </location>
</feature>
<sequence>MPRRREVPKREVLPDPKYGNVDVAKFMNMLMLSGKKSVAERIVYGAFEQIQTKGGKDPLEVFTVALNNVKPVVEVKSRRVGGANYQVPVEVRPSRRMALAMRWLREAAKKRSEKSMALRLAGELSEAAEGRGGAMKKRDEVHRMAEANRAFSHFRF</sequence>
<dbReference type="EMBL" id="CP000010">
    <property type="protein sequence ID" value="AAU47874.1"/>
    <property type="molecule type" value="Genomic_DNA"/>
</dbReference>
<dbReference type="RefSeq" id="WP_004198359.1">
    <property type="nucleotide sequence ID" value="NC_006348.1"/>
</dbReference>
<dbReference type="RefSeq" id="YP_104170.1">
    <property type="nucleotide sequence ID" value="NC_006348.1"/>
</dbReference>
<dbReference type="SMR" id="Q62GK1"/>
<dbReference type="GeneID" id="93171021"/>
<dbReference type="KEGG" id="bma:BMA2636"/>
<dbReference type="PATRIC" id="fig|243160.12.peg.2707"/>
<dbReference type="eggNOG" id="COG0049">
    <property type="taxonomic scope" value="Bacteria"/>
</dbReference>
<dbReference type="HOGENOM" id="CLU_072226_1_1_4"/>
<dbReference type="PRO" id="PR:Q62GK1"/>
<dbReference type="Proteomes" id="UP000006693">
    <property type="component" value="Chromosome 1"/>
</dbReference>
<dbReference type="GO" id="GO:0015935">
    <property type="term" value="C:small ribosomal subunit"/>
    <property type="evidence" value="ECO:0007669"/>
    <property type="project" value="InterPro"/>
</dbReference>
<dbReference type="GO" id="GO:0019843">
    <property type="term" value="F:rRNA binding"/>
    <property type="evidence" value="ECO:0007669"/>
    <property type="project" value="UniProtKB-UniRule"/>
</dbReference>
<dbReference type="GO" id="GO:0003735">
    <property type="term" value="F:structural constituent of ribosome"/>
    <property type="evidence" value="ECO:0007669"/>
    <property type="project" value="InterPro"/>
</dbReference>
<dbReference type="GO" id="GO:0000049">
    <property type="term" value="F:tRNA binding"/>
    <property type="evidence" value="ECO:0007669"/>
    <property type="project" value="UniProtKB-UniRule"/>
</dbReference>
<dbReference type="GO" id="GO:0006412">
    <property type="term" value="P:translation"/>
    <property type="evidence" value="ECO:0007669"/>
    <property type="project" value="UniProtKB-UniRule"/>
</dbReference>
<dbReference type="CDD" id="cd14869">
    <property type="entry name" value="uS7_Bacteria"/>
    <property type="match status" value="1"/>
</dbReference>
<dbReference type="FunFam" id="1.10.455.10:FF:000001">
    <property type="entry name" value="30S ribosomal protein S7"/>
    <property type="match status" value="1"/>
</dbReference>
<dbReference type="Gene3D" id="1.10.455.10">
    <property type="entry name" value="Ribosomal protein S7 domain"/>
    <property type="match status" value="1"/>
</dbReference>
<dbReference type="HAMAP" id="MF_00480_B">
    <property type="entry name" value="Ribosomal_uS7_B"/>
    <property type="match status" value="1"/>
</dbReference>
<dbReference type="InterPro" id="IPR000235">
    <property type="entry name" value="Ribosomal_uS7"/>
</dbReference>
<dbReference type="InterPro" id="IPR005717">
    <property type="entry name" value="Ribosomal_uS7_bac/org-type"/>
</dbReference>
<dbReference type="InterPro" id="IPR020606">
    <property type="entry name" value="Ribosomal_uS7_CS"/>
</dbReference>
<dbReference type="InterPro" id="IPR023798">
    <property type="entry name" value="Ribosomal_uS7_dom"/>
</dbReference>
<dbReference type="InterPro" id="IPR036823">
    <property type="entry name" value="Ribosomal_uS7_dom_sf"/>
</dbReference>
<dbReference type="NCBIfam" id="TIGR01029">
    <property type="entry name" value="rpsG_bact"/>
    <property type="match status" value="1"/>
</dbReference>
<dbReference type="PANTHER" id="PTHR11205">
    <property type="entry name" value="RIBOSOMAL PROTEIN S7"/>
    <property type="match status" value="1"/>
</dbReference>
<dbReference type="Pfam" id="PF00177">
    <property type="entry name" value="Ribosomal_S7"/>
    <property type="match status" value="1"/>
</dbReference>
<dbReference type="PIRSF" id="PIRSF002122">
    <property type="entry name" value="RPS7p_RPS7a_RPS5e_RPS7o"/>
    <property type="match status" value="1"/>
</dbReference>
<dbReference type="SUPFAM" id="SSF47973">
    <property type="entry name" value="Ribosomal protein S7"/>
    <property type="match status" value="1"/>
</dbReference>
<dbReference type="PROSITE" id="PS00052">
    <property type="entry name" value="RIBOSOMAL_S7"/>
    <property type="match status" value="1"/>
</dbReference>
<protein>
    <recommendedName>
        <fullName evidence="1">Small ribosomal subunit protein uS7</fullName>
    </recommendedName>
    <alternativeName>
        <fullName evidence="2">30S ribosomal protein S7</fullName>
    </alternativeName>
</protein>
<organism>
    <name type="scientific">Burkholderia mallei (strain ATCC 23344)</name>
    <dbReference type="NCBI Taxonomy" id="243160"/>
    <lineage>
        <taxon>Bacteria</taxon>
        <taxon>Pseudomonadati</taxon>
        <taxon>Pseudomonadota</taxon>
        <taxon>Betaproteobacteria</taxon>
        <taxon>Burkholderiales</taxon>
        <taxon>Burkholderiaceae</taxon>
        <taxon>Burkholderia</taxon>
        <taxon>pseudomallei group</taxon>
    </lineage>
</organism>
<gene>
    <name evidence="1" type="primary">rpsG</name>
    <name type="ordered locus">BMA2636</name>
</gene>
<reference key="1">
    <citation type="journal article" date="2004" name="Proc. Natl. Acad. Sci. U.S.A.">
        <title>Structural flexibility in the Burkholderia mallei genome.</title>
        <authorList>
            <person name="Nierman W.C."/>
            <person name="DeShazer D."/>
            <person name="Kim H.S."/>
            <person name="Tettelin H."/>
            <person name="Nelson K.E."/>
            <person name="Feldblyum T.V."/>
            <person name="Ulrich R.L."/>
            <person name="Ronning C.M."/>
            <person name="Brinkac L.M."/>
            <person name="Daugherty S.C."/>
            <person name="Davidsen T.D."/>
            <person name="DeBoy R.T."/>
            <person name="Dimitrov G."/>
            <person name="Dodson R.J."/>
            <person name="Durkin A.S."/>
            <person name="Gwinn M.L."/>
            <person name="Haft D.H."/>
            <person name="Khouri H.M."/>
            <person name="Kolonay J.F."/>
            <person name="Madupu R."/>
            <person name="Mohammoud Y."/>
            <person name="Nelson W.C."/>
            <person name="Radune D."/>
            <person name="Romero C.M."/>
            <person name="Sarria S."/>
            <person name="Selengut J."/>
            <person name="Shamblin C."/>
            <person name="Sullivan S.A."/>
            <person name="White O."/>
            <person name="Yu Y."/>
            <person name="Zafar N."/>
            <person name="Zhou L."/>
            <person name="Fraser C.M."/>
        </authorList>
    </citation>
    <scope>NUCLEOTIDE SEQUENCE [LARGE SCALE GENOMIC DNA]</scope>
    <source>
        <strain>ATCC 23344</strain>
    </source>
</reference>